<sequence>MRYLVTLLLSLAVLVTAGCGWHLRSTTQVPASMKTMILDSGDPNGPLSRAVRNQLRLNNVNLLDKDTTRKDVPSLRLGTVTISQDTASVFQDGQTAEYQMVMTVNASVLIPGHDIYPISTKVYRSFFDNPQMALAKDNEQAMIVQEMYDKAAEQLIRKLTSVRAADIQATKEEATADNETAAPASTPARVSTTLSN</sequence>
<reference key="1">
    <citation type="journal article" date="2009" name="PLoS ONE">
        <title>Salmonella paratyphi C: genetic divergence from Salmonella choleraesuis and pathogenic convergence with Salmonella typhi.</title>
        <authorList>
            <person name="Liu W.-Q."/>
            <person name="Feng Y."/>
            <person name="Wang Y."/>
            <person name="Zou Q.-H."/>
            <person name="Chen F."/>
            <person name="Guo J.-T."/>
            <person name="Peng Y.-H."/>
            <person name="Jin Y."/>
            <person name="Li Y.-G."/>
            <person name="Hu S.-N."/>
            <person name="Johnston R.N."/>
            <person name="Liu G.-R."/>
            <person name="Liu S.-L."/>
        </authorList>
    </citation>
    <scope>NUCLEOTIDE SEQUENCE [LARGE SCALE GENOMIC DNA]</scope>
    <source>
        <strain>RKS4594</strain>
    </source>
</reference>
<proteinExistence type="inferred from homology"/>
<accession>C0PW77</accession>
<name>LPTE_SALPC</name>
<feature type="signal peptide" evidence="1">
    <location>
        <begin position="1"/>
        <end position="18"/>
    </location>
</feature>
<feature type="chain" id="PRO_1000164476" description="LPS-assembly lipoprotein LptE">
    <location>
        <begin position="19"/>
        <end position="196"/>
    </location>
</feature>
<feature type="region of interest" description="Disordered" evidence="2">
    <location>
        <begin position="171"/>
        <end position="196"/>
    </location>
</feature>
<feature type="lipid moiety-binding region" description="N-palmitoyl cysteine" evidence="1">
    <location>
        <position position="19"/>
    </location>
</feature>
<feature type="lipid moiety-binding region" description="S-diacylglycerol cysteine" evidence="1">
    <location>
        <position position="19"/>
    </location>
</feature>
<keyword id="KW-0998">Cell outer membrane</keyword>
<keyword id="KW-0449">Lipoprotein</keyword>
<keyword id="KW-0472">Membrane</keyword>
<keyword id="KW-0564">Palmitate</keyword>
<keyword id="KW-0732">Signal</keyword>
<evidence type="ECO:0000255" key="1">
    <source>
        <dbReference type="HAMAP-Rule" id="MF_01186"/>
    </source>
</evidence>
<evidence type="ECO:0000256" key="2">
    <source>
        <dbReference type="SAM" id="MobiDB-lite"/>
    </source>
</evidence>
<protein>
    <recommendedName>
        <fullName evidence="1">LPS-assembly lipoprotein LptE</fullName>
    </recommendedName>
</protein>
<organism>
    <name type="scientific">Salmonella paratyphi C (strain RKS4594)</name>
    <dbReference type="NCBI Taxonomy" id="476213"/>
    <lineage>
        <taxon>Bacteria</taxon>
        <taxon>Pseudomonadati</taxon>
        <taxon>Pseudomonadota</taxon>
        <taxon>Gammaproteobacteria</taxon>
        <taxon>Enterobacterales</taxon>
        <taxon>Enterobacteriaceae</taxon>
        <taxon>Salmonella</taxon>
    </lineage>
</organism>
<gene>
    <name evidence="1" type="primary">lptE</name>
    <name type="synonym">rlpB</name>
    <name type="ordered locus">SPC_0663</name>
</gene>
<dbReference type="EMBL" id="CP000857">
    <property type="protein sequence ID" value="ACN44840.1"/>
    <property type="molecule type" value="Genomic_DNA"/>
</dbReference>
<dbReference type="RefSeq" id="WP_001269950.1">
    <property type="nucleotide sequence ID" value="NC_012125.1"/>
</dbReference>
<dbReference type="SMR" id="C0PW77"/>
<dbReference type="KEGG" id="sei:SPC_0663"/>
<dbReference type="HOGENOM" id="CLU_103309_1_1_6"/>
<dbReference type="Proteomes" id="UP000001599">
    <property type="component" value="Chromosome"/>
</dbReference>
<dbReference type="GO" id="GO:0009279">
    <property type="term" value="C:cell outer membrane"/>
    <property type="evidence" value="ECO:0007669"/>
    <property type="project" value="UniProtKB-SubCell"/>
</dbReference>
<dbReference type="GO" id="GO:1990351">
    <property type="term" value="C:transporter complex"/>
    <property type="evidence" value="ECO:0007669"/>
    <property type="project" value="TreeGrafter"/>
</dbReference>
<dbReference type="GO" id="GO:0001530">
    <property type="term" value="F:lipopolysaccharide binding"/>
    <property type="evidence" value="ECO:0007669"/>
    <property type="project" value="TreeGrafter"/>
</dbReference>
<dbReference type="GO" id="GO:0043165">
    <property type="term" value="P:Gram-negative-bacterium-type cell outer membrane assembly"/>
    <property type="evidence" value="ECO:0007669"/>
    <property type="project" value="UniProtKB-UniRule"/>
</dbReference>
<dbReference type="GO" id="GO:0015920">
    <property type="term" value="P:lipopolysaccharide transport"/>
    <property type="evidence" value="ECO:0007669"/>
    <property type="project" value="TreeGrafter"/>
</dbReference>
<dbReference type="FunFam" id="3.30.160.150:FF:000001">
    <property type="entry name" value="LPS-assembly lipoprotein LptE"/>
    <property type="match status" value="1"/>
</dbReference>
<dbReference type="Gene3D" id="3.30.160.150">
    <property type="entry name" value="Lipoprotein like domain"/>
    <property type="match status" value="1"/>
</dbReference>
<dbReference type="HAMAP" id="MF_01186">
    <property type="entry name" value="LPS_assembly_LptE"/>
    <property type="match status" value="1"/>
</dbReference>
<dbReference type="InterPro" id="IPR007485">
    <property type="entry name" value="LPS_assembly_LptE"/>
</dbReference>
<dbReference type="NCBIfam" id="NF008062">
    <property type="entry name" value="PRK10796.1"/>
    <property type="match status" value="1"/>
</dbReference>
<dbReference type="PANTHER" id="PTHR38098">
    <property type="entry name" value="LPS-ASSEMBLY LIPOPROTEIN LPTE"/>
    <property type="match status" value="1"/>
</dbReference>
<dbReference type="PANTHER" id="PTHR38098:SF1">
    <property type="entry name" value="LPS-ASSEMBLY LIPOPROTEIN LPTE"/>
    <property type="match status" value="1"/>
</dbReference>
<dbReference type="Pfam" id="PF04390">
    <property type="entry name" value="LptE"/>
    <property type="match status" value="1"/>
</dbReference>
<dbReference type="PROSITE" id="PS51257">
    <property type="entry name" value="PROKAR_LIPOPROTEIN"/>
    <property type="match status" value="1"/>
</dbReference>
<comment type="function">
    <text evidence="1">Together with LptD, is involved in the assembly of lipopolysaccharide (LPS) at the surface of the outer membrane. Required for the proper assembly of LptD. Binds LPS and may serve as the LPS recognition site at the outer membrane.</text>
</comment>
<comment type="subunit">
    <text evidence="1">Component of the lipopolysaccharide transport and assembly complex. Interacts with LptD.</text>
</comment>
<comment type="subcellular location">
    <subcellularLocation>
        <location evidence="1">Cell outer membrane</location>
        <topology evidence="1">Lipid-anchor</topology>
    </subcellularLocation>
</comment>
<comment type="similarity">
    <text evidence="1">Belongs to the LptE lipoprotein family.</text>
</comment>